<keyword id="KW-1003">Cell membrane</keyword>
<keyword id="KW-0217">Developmental protein</keyword>
<keyword id="KW-0341">Growth regulation</keyword>
<keyword id="KW-0472">Membrane</keyword>
<keyword id="KW-1185">Reference proteome</keyword>
<gene>
    <name evidence="9" type="primary">SAUR9</name>
    <name evidence="11" type="ordered locus">At4g36110</name>
    <name evidence="12" type="ordered locus">T19K4.240</name>
</gene>
<evidence type="ECO:0000250" key="1">
    <source>
        <dbReference type="UniProtKB" id="Q9FJG1"/>
    </source>
</evidence>
<evidence type="ECO:0000250" key="2">
    <source>
        <dbReference type="UniProtKB" id="Q9SI60"/>
    </source>
</evidence>
<evidence type="ECO:0000269" key="3">
    <source>
    </source>
</evidence>
<evidence type="ECO:0000269" key="4">
    <source>
    </source>
</evidence>
<evidence type="ECO:0000269" key="5">
    <source>
    </source>
</evidence>
<evidence type="ECO:0000269" key="6">
    <source>
    </source>
</evidence>
<evidence type="ECO:0000269" key="7">
    <source>
    </source>
</evidence>
<evidence type="ECO:0000269" key="8">
    <source>
    </source>
</evidence>
<evidence type="ECO:0000303" key="9">
    <source>
    </source>
</evidence>
<evidence type="ECO:0000305" key="10"/>
<evidence type="ECO:0000312" key="11">
    <source>
        <dbReference type="Araport" id="AT4G36110"/>
    </source>
</evidence>
<evidence type="ECO:0000312" key="12">
    <source>
        <dbReference type="EMBL" id="AAG40017.1"/>
    </source>
</evidence>
<accession>O65648</accession>
<protein>
    <recommendedName>
        <fullName evidence="9">Protein SMALL AUXIN UP-REGULATED RNA 9</fullName>
    </recommendedName>
</protein>
<feature type="chain" id="PRO_0000455145" description="Protein SMALL AUXIN UP-REGULATED RNA 9">
    <location>
        <begin position="1"/>
        <end position="104"/>
    </location>
</feature>
<dbReference type="EMBL" id="AL022373">
    <property type="protein sequence ID" value="CAA18505.1"/>
    <property type="molecule type" value="Genomic_DNA"/>
</dbReference>
<dbReference type="EMBL" id="AL161588">
    <property type="protein sequence ID" value="CAB81520.1"/>
    <property type="molecule type" value="Genomic_DNA"/>
</dbReference>
<dbReference type="EMBL" id="CP002687">
    <property type="protein sequence ID" value="AEE86621.1"/>
    <property type="molecule type" value="Genomic_DNA"/>
</dbReference>
<dbReference type="EMBL" id="AF324666">
    <property type="protein sequence ID" value="AAG40017.1"/>
    <property type="molecule type" value="mRNA"/>
</dbReference>
<dbReference type="EMBL" id="AF327530">
    <property type="protein sequence ID" value="AAG42911.1"/>
    <property type="molecule type" value="mRNA"/>
</dbReference>
<dbReference type="EMBL" id="AF349524">
    <property type="protein sequence ID" value="AAK15571.1"/>
    <property type="molecule type" value="mRNA"/>
</dbReference>
<dbReference type="EMBL" id="AY065057">
    <property type="protein sequence ID" value="AAL57691.1"/>
    <property type="molecule type" value="mRNA"/>
</dbReference>
<dbReference type="EMBL" id="AY093746">
    <property type="protein sequence ID" value="AAM10370.1"/>
    <property type="molecule type" value="mRNA"/>
</dbReference>
<dbReference type="PIR" id="T05504">
    <property type="entry name" value="T05504"/>
</dbReference>
<dbReference type="RefSeq" id="NP_195334.1">
    <property type="nucleotide sequence ID" value="NM_119778.3"/>
</dbReference>
<dbReference type="FunCoup" id="O65648">
    <property type="interactions" value="289"/>
</dbReference>
<dbReference type="IntAct" id="O65648">
    <property type="interactions" value="7"/>
</dbReference>
<dbReference type="STRING" id="3702.O65648"/>
<dbReference type="iPTMnet" id="O65648"/>
<dbReference type="PaxDb" id="3702-AT4G36110.1"/>
<dbReference type="ProteomicsDB" id="191486"/>
<dbReference type="EnsemblPlants" id="AT4G36110.1">
    <property type="protein sequence ID" value="AT4G36110.1"/>
    <property type="gene ID" value="AT4G36110"/>
</dbReference>
<dbReference type="GeneID" id="829768"/>
<dbReference type="Gramene" id="AT4G36110.1">
    <property type="protein sequence ID" value="AT4G36110.1"/>
    <property type="gene ID" value="AT4G36110"/>
</dbReference>
<dbReference type="KEGG" id="ath:AT4G36110"/>
<dbReference type="Araport" id="AT4G36110"/>
<dbReference type="TAIR" id="AT4G36110">
    <property type="gene designation" value="SAUR9"/>
</dbReference>
<dbReference type="eggNOG" id="ENOG502S5IE">
    <property type="taxonomic scope" value="Eukaryota"/>
</dbReference>
<dbReference type="HOGENOM" id="CLU_098106_2_3_1"/>
<dbReference type="InParanoid" id="O65648"/>
<dbReference type="OMA" id="GNCYFND"/>
<dbReference type="OrthoDB" id="1841988at2759"/>
<dbReference type="PhylomeDB" id="O65648"/>
<dbReference type="PRO" id="PR:O65648"/>
<dbReference type="Proteomes" id="UP000006548">
    <property type="component" value="Chromosome 4"/>
</dbReference>
<dbReference type="ExpressionAtlas" id="O65648">
    <property type="expression patterns" value="baseline and differential"/>
</dbReference>
<dbReference type="GO" id="GO:0005886">
    <property type="term" value="C:plasma membrane"/>
    <property type="evidence" value="ECO:0007669"/>
    <property type="project" value="UniProtKB-SubCell"/>
</dbReference>
<dbReference type="GO" id="GO:0009737">
    <property type="term" value="P:response to abscisic acid"/>
    <property type="evidence" value="ECO:0000270"/>
    <property type="project" value="UniProtKB"/>
</dbReference>
<dbReference type="GO" id="GO:0009733">
    <property type="term" value="P:response to auxin"/>
    <property type="evidence" value="ECO:0000270"/>
    <property type="project" value="UniProtKB"/>
</dbReference>
<dbReference type="GO" id="GO:0009741">
    <property type="term" value="P:response to brassinosteroid"/>
    <property type="evidence" value="ECO:0000270"/>
    <property type="project" value="UniProtKB"/>
</dbReference>
<dbReference type="GO" id="GO:0009642">
    <property type="term" value="P:response to light intensity"/>
    <property type="evidence" value="ECO:0000270"/>
    <property type="project" value="UniProtKB"/>
</dbReference>
<dbReference type="GO" id="GO:0009639">
    <property type="term" value="P:response to red or far red light"/>
    <property type="evidence" value="ECO:0000270"/>
    <property type="project" value="UniProtKB"/>
</dbReference>
<dbReference type="InterPro" id="IPR003676">
    <property type="entry name" value="SAUR_fam"/>
</dbReference>
<dbReference type="PANTHER" id="PTHR31374">
    <property type="entry name" value="AUXIN-INDUCED PROTEIN-LIKE-RELATED"/>
    <property type="match status" value="1"/>
</dbReference>
<dbReference type="PANTHER" id="PTHR31374:SF403">
    <property type="entry name" value="PROTEIN SMALL AUXIN UP-REGULATED RNA 9"/>
    <property type="match status" value="1"/>
</dbReference>
<dbReference type="Pfam" id="PF02519">
    <property type="entry name" value="Auxin_inducible"/>
    <property type="match status" value="1"/>
</dbReference>
<sequence>MAIKKSNKAALSQAASLKQILKRCSSLGKKNQGNCYFNDVPKGHFPVYVGQHRSRYVVPISWLDHHEFQSLLQLAEEEFGFEHEMGLTIPCDEVVFRSLISMFR</sequence>
<comment type="function">
    <text evidence="2 4 8">Provide a mechanistic link between auxin and plasma membrane H(+)-ATPases (PM H(+)-ATPases, e.g. AHA1 and AHA2), and triggers PM H(+)-ATPases activity by promoting phosphorylation of their C-terminal autoinhibitory domain as a result of PP2C-D subfamily of type 2C phosphatases inhibition, thus leading to the acidification of the apoplast and the facilitation of solutes and water uptake to drive cell expansion (PubMed:24858935). Triggers plant growth probably by promoting cell elongation (By similarity). Regulates branch angles and bending (By similarity). Probably involved in light intensity mediated root development (PubMed:31325959).</text>
</comment>
<comment type="subunit">
    <text evidence="4">Interacts with and inhibits PP2C-D subfamily of type 2C phosphatases such as PP2C67/PP2C-D1.</text>
</comment>
<comment type="subcellular location">
    <subcellularLocation>
        <location evidence="1">Cell membrane</location>
        <topology evidence="1">Peripheral membrane protein</topology>
    </subcellularLocation>
</comment>
<comment type="tissue specificity">
    <text evidence="6">Expressed in etiolated hypocotyls, petioles, leaves and flowers.</text>
</comment>
<comment type="developmental stage">
    <text evidence="6">Confined to the midveins of petioles and leaf blades (PubMed:29258424). In flowers, only expressed in the filaments and stigma papillae (PubMed:29258424).</text>
</comment>
<comment type="induction">
    <text evidence="3 5 6 7 8">Induced by auxin in an ABP1-dependent manner (PubMed:21223392, PubMed:27999086, PubMed:29258424). Triggered by brassinosteroids, including brassinolide (BL) (PubMed:29258424, PubMed:30649552). Accumulates in reduced red/far-red light ration (R:FR) conditions mimicking shaded conditions (PubMed:29258424). Repressed by abscisic acid (PubMed:29258424). Induced by light (PubMed:31325959).</text>
</comment>
<comment type="similarity">
    <text evidence="10">Belongs to the ARG7 family.</text>
</comment>
<organism>
    <name type="scientific">Arabidopsis thaliana</name>
    <name type="common">Mouse-ear cress</name>
    <dbReference type="NCBI Taxonomy" id="3702"/>
    <lineage>
        <taxon>Eukaryota</taxon>
        <taxon>Viridiplantae</taxon>
        <taxon>Streptophyta</taxon>
        <taxon>Embryophyta</taxon>
        <taxon>Tracheophyta</taxon>
        <taxon>Spermatophyta</taxon>
        <taxon>Magnoliopsida</taxon>
        <taxon>eudicotyledons</taxon>
        <taxon>Gunneridae</taxon>
        <taxon>Pentapetalae</taxon>
        <taxon>rosids</taxon>
        <taxon>malvids</taxon>
        <taxon>Brassicales</taxon>
        <taxon>Brassicaceae</taxon>
        <taxon>Camelineae</taxon>
        <taxon>Arabidopsis</taxon>
    </lineage>
</organism>
<reference key="1">
    <citation type="journal article" date="1999" name="Nature">
        <title>Sequence and analysis of chromosome 4 of the plant Arabidopsis thaliana.</title>
        <authorList>
            <person name="Mayer K.F.X."/>
            <person name="Schueller C."/>
            <person name="Wambutt R."/>
            <person name="Murphy G."/>
            <person name="Volckaert G."/>
            <person name="Pohl T."/>
            <person name="Duesterhoeft A."/>
            <person name="Stiekema W."/>
            <person name="Entian K.-D."/>
            <person name="Terryn N."/>
            <person name="Harris B."/>
            <person name="Ansorge W."/>
            <person name="Brandt P."/>
            <person name="Grivell L.A."/>
            <person name="Rieger M."/>
            <person name="Weichselgartner M."/>
            <person name="de Simone V."/>
            <person name="Obermaier B."/>
            <person name="Mache R."/>
            <person name="Mueller M."/>
            <person name="Kreis M."/>
            <person name="Delseny M."/>
            <person name="Puigdomenech P."/>
            <person name="Watson M."/>
            <person name="Schmidtheini T."/>
            <person name="Reichert B."/>
            <person name="Portetelle D."/>
            <person name="Perez-Alonso M."/>
            <person name="Boutry M."/>
            <person name="Bancroft I."/>
            <person name="Vos P."/>
            <person name="Hoheisel J."/>
            <person name="Zimmermann W."/>
            <person name="Wedler H."/>
            <person name="Ridley P."/>
            <person name="Langham S.-A."/>
            <person name="McCullagh B."/>
            <person name="Bilham L."/>
            <person name="Robben J."/>
            <person name="van der Schueren J."/>
            <person name="Grymonprez B."/>
            <person name="Chuang Y.-J."/>
            <person name="Vandenbussche F."/>
            <person name="Braeken M."/>
            <person name="Weltjens I."/>
            <person name="Voet M."/>
            <person name="Bastiaens I."/>
            <person name="Aert R."/>
            <person name="Defoor E."/>
            <person name="Weitzenegger T."/>
            <person name="Bothe G."/>
            <person name="Ramsperger U."/>
            <person name="Hilbert H."/>
            <person name="Braun M."/>
            <person name="Holzer E."/>
            <person name="Brandt A."/>
            <person name="Peters S."/>
            <person name="van Staveren M."/>
            <person name="Dirkse W."/>
            <person name="Mooijman P."/>
            <person name="Klein Lankhorst R."/>
            <person name="Rose M."/>
            <person name="Hauf J."/>
            <person name="Koetter P."/>
            <person name="Berneiser S."/>
            <person name="Hempel S."/>
            <person name="Feldpausch M."/>
            <person name="Lamberth S."/>
            <person name="Van den Daele H."/>
            <person name="De Keyser A."/>
            <person name="Buysshaert C."/>
            <person name="Gielen J."/>
            <person name="Villarroel R."/>
            <person name="De Clercq R."/>
            <person name="van Montagu M."/>
            <person name="Rogers J."/>
            <person name="Cronin A."/>
            <person name="Quail M.A."/>
            <person name="Bray-Allen S."/>
            <person name="Clark L."/>
            <person name="Doggett J."/>
            <person name="Hall S."/>
            <person name="Kay M."/>
            <person name="Lennard N."/>
            <person name="McLay K."/>
            <person name="Mayes R."/>
            <person name="Pettett A."/>
            <person name="Rajandream M.A."/>
            <person name="Lyne M."/>
            <person name="Benes V."/>
            <person name="Rechmann S."/>
            <person name="Borkova D."/>
            <person name="Bloecker H."/>
            <person name="Scharfe M."/>
            <person name="Grimm M."/>
            <person name="Loehnert T.-H."/>
            <person name="Dose S."/>
            <person name="de Haan M."/>
            <person name="Maarse A.C."/>
            <person name="Schaefer M."/>
            <person name="Mueller-Auer S."/>
            <person name="Gabel C."/>
            <person name="Fuchs M."/>
            <person name="Fartmann B."/>
            <person name="Granderath K."/>
            <person name="Dauner D."/>
            <person name="Herzl A."/>
            <person name="Neumann S."/>
            <person name="Argiriou A."/>
            <person name="Vitale D."/>
            <person name="Liguori R."/>
            <person name="Piravandi E."/>
            <person name="Massenet O."/>
            <person name="Quigley F."/>
            <person name="Clabauld G."/>
            <person name="Muendlein A."/>
            <person name="Felber R."/>
            <person name="Schnabl S."/>
            <person name="Hiller R."/>
            <person name="Schmidt W."/>
            <person name="Lecharny A."/>
            <person name="Aubourg S."/>
            <person name="Chefdor F."/>
            <person name="Cooke R."/>
            <person name="Berger C."/>
            <person name="Monfort A."/>
            <person name="Casacuberta E."/>
            <person name="Gibbons T."/>
            <person name="Weber N."/>
            <person name="Vandenbol M."/>
            <person name="Bargues M."/>
            <person name="Terol J."/>
            <person name="Torres A."/>
            <person name="Perez-Perez A."/>
            <person name="Purnelle B."/>
            <person name="Bent E."/>
            <person name="Johnson S."/>
            <person name="Tacon D."/>
            <person name="Jesse T."/>
            <person name="Heijnen L."/>
            <person name="Schwarz S."/>
            <person name="Scholler P."/>
            <person name="Heber S."/>
            <person name="Francs P."/>
            <person name="Bielke C."/>
            <person name="Frishman D."/>
            <person name="Haase D."/>
            <person name="Lemcke K."/>
            <person name="Mewes H.-W."/>
            <person name="Stocker S."/>
            <person name="Zaccaria P."/>
            <person name="Bevan M."/>
            <person name="Wilson R.K."/>
            <person name="de la Bastide M."/>
            <person name="Habermann K."/>
            <person name="Parnell L."/>
            <person name="Dedhia N."/>
            <person name="Gnoj L."/>
            <person name="Schutz K."/>
            <person name="Huang E."/>
            <person name="Spiegel L."/>
            <person name="Sekhon M."/>
            <person name="Murray J."/>
            <person name="Sheet P."/>
            <person name="Cordes M."/>
            <person name="Abu-Threideh J."/>
            <person name="Stoneking T."/>
            <person name="Kalicki J."/>
            <person name="Graves T."/>
            <person name="Harmon G."/>
            <person name="Edwards J."/>
            <person name="Latreille P."/>
            <person name="Courtney L."/>
            <person name="Cloud J."/>
            <person name="Abbott A."/>
            <person name="Scott K."/>
            <person name="Johnson D."/>
            <person name="Minx P."/>
            <person name="Bentley D."/>
            <person name="Fulton B."/>
            <person name="Miller N."/>
            <person name="Greco T."/>
            <person name="Kemp K."/>
            <person name="Kramer J."/>
            <person name="Fulton L."/>
            <person name="Mardis E."/>
            <person name="Dante M."/>
            <person name="Pepin K."/>
            <person name="Hillier L.W."/>
            <person name="Nelson J."/>
            <person name="Spieth J."/>
            <person name="Ryan E."/>
            <person name="Andrews S."/>
            <person name="Geisel C."/>
            <person name="Layman D."/>
            <person name="Du H."/>
            <person name="Ali J."/>
            <person name="Berghoff A."/>
            <person name="Jones K."/>
            <person name="Drone K."/>
            <person name="Cotton M."/>
            <person name="Joshu C."/>
            <person name="Antonoiu B."/>
            <person name="Zidanic M."/>
            <person name="Strong C."/>
            <person name="Sun H."/>
            <person name="Lamar B."/>
            <person name="Yordan C."/>
            <person name="Ma P."/>
            <person name="Zhong J."/>
            <person name="Preston R."/>
            <person name="Vil D."/>
            <person name="Shekher M."/>
            <person name="Matero A."/>
            <person name="Shah R."/>
            <person name="Swaby I.K."/>
            <person name="O'Shaughnessy A."/>
            <person name="Rodriguez M."/>
            <person name="Hoffman J."/>
            <person name="Till S."/>
            <person name="Granat S."/>
            <person name="Shohdy N."/>
            <person name="Hasegawa A."/>
            <person name="Hameed A."/>
            <person name="Lodhi M."/>
            <person name="Johnson A."/>
            <person name="Chen E."/>
            <person name="Marra M.A."/>
            <person name="Martienssen R."/>
            <person name="McCombie W.R."/>
        </authorList>
    </citation>
    <scope>NUCLEOTIDE SEQUENCE [LARGE SCALE GENOMIC DNA]</scope>
    <source>
        <strain>cv. Columbia</strain>
    </source>
</reference>
<reference key="2">
    <citation type="journal article" date="2017" name="Plant J.">
        <title>Araport11: a complete reannotation of the Arabidopsis thaliana reference genome.</title>
        <authorList>
            <person name="Cheng C.Y."/>
            <person name="Krishnakumar V."/>
            <person name="Chan A.P."/>
            <person name="Thibaud-Nissen F."/>
            <person name="Schobel S."/>
            <person name="Town C.D."/>
        </authorList>
    </citation>
    <scope>GENOME REANNOTATION</scope>
    <source>
        <strain>cv. Columbia</strain>
    </source>
</reference>
<reference key="3">
    <citation type="journal article" date="2003" name="Science">
        <title>Empirical analysis of transcriptional activity in the Arabidopsis genome.</title>
        <authorList>
            <person name="Yamada K."/>
            <person name="Lim J."/>
            <person name="Dale J.M."/>
            <person name="Chen H."/>
            <person name="Shinn P."/>
            <person name="Palm C.J."/>
            <person name="Southwick A.M."/>
            <person name="Wu H.C."/>
            <person name="Kim C.J."/>
            <person name="Nguyen M."/>
            <person name="Pham P.K."/>
            <person name="Cheuk R.F."/>
            <person name="Karlin-Newmann G."/>
            <person name="Liu S.X."/>
            <person name="Lam B."/>
            <person name="Sakano H."/>
            <person name="Wu T."/>
            <person name="Yu G."/>
            <person name="Miranda M."/>
            <person name="Quach H.L."/>
            <person name="Tripp M."/>
            <person name="Chang C.H."/>
            <person name="Lee J.M."/>
            <person name="Toriumi M.J."/>
            <person name="Chan M.M."/>
            <person name="Tang C.C."/>
            <person name="Onodera C.S."/>
            <person name="Deng J.M."/>
            <person name="Akiyama K."/>
            <person name="Ansari Y."/>
            <person name="Arakawa T."/>
            <person name="Banh J."/>
            <person name="Banno F."/>
            <person name="Bowser L."/>
            <person name="Brooks S.Y."/>
            <person name="Carninci P."/>
            <person name="Chao Q."/>
            <person name="Choy N."/>
            <person name="Enju A."/>
            <person name="Goldsmith A.D."/>
            <person name="Gurjal M."/>
            <person name="Hansen N.F."/>
            <person name="Hayashizaki Y."/>
            <person name="Johnson-Hopson C."/>
            <person name="Hsuan V.W."/>
            <person name="Iida K."/>
            <person name="Karnes M."/>
            <person name="Khan S."/>
            <person name="Koesema E."/>
            <person name="Ishida J."/>
            <person name="Jiang P.X."/>
            <person name="Jones T."/>
            <person name="Kawai J."/>
            <person name="Kamiya A."/>
            <person name="Meyers C."/>
            <person name="Nakajima M."/>
            <person name="Narusaka M."/>
            <person name="Seki M."/>
            <person name="Sakurai T."/>
            <person name="Satou M."/>
            <person name="Tamse R."/>
            <person name="Vaysberg M."/>
            <person name="Wallender E.K."/>
            <person name="Wong C."/>
            <person name="Yamamura Y."/>
            <person name="Yuan S."/>
            <person name="Shinozaki K."/>
            <person name="Davis R.W."/>
            <person name="Theologis A."/>
            <person name="Ecker J.R."/>
        </authorList>
    </citation>
    <scope>NUCLEOTIDE SEQUENCE [LARGE SCALE MRNA]</scope>
    <source>
        <strain>cv. Columbia</strain>
    </source>
</reference>
<reference key="4">
    <citation type="journal article" date="2011" name="Plant J.">
        <title>The heterozygous abp1/ABP1 insertional mutant has defects in functions requiring polar auxin transport and in regulation of early auxin-regulated genes.</title>
        <authorList>
            <person name="Effendi Y."/>
            <person name="Rietz S."/>
            <person name="Fischer U."/>
            <person name="Scherer G.F."/>
        </authorList>
    </citation>
    <scope>INDUCTION BY AUXIN</scope>
    <source>
        <strain>cv. Columbia</strain>
    </source>
</reference>
<reference key="5">
    <citation type="journal article" date="2014" name="Plant Cell">
        <title>SAUR inhibition of PP2C-D phosphatases activates plasma membrane H+-ATPases to promote cell expansion in Arabidopsis.</title>
        <authorList>
            <person name="Spartz A.K."/>
            <person name="Ren H."/>
            <person name="Park M.Y."/>
            <person name="Grandt K.N."/>
            <person name="Lee S.H."/>
            <person name="Murphy A.S."/>
            <person name="Sussman M.R."/>
            <person name="Overvoorde P.J."/>
            <person name="Gray W.M."/>
        </authorList>
    </citation>
    <scope>FUNCTION</scope>
    <scope>INTERACTION WITH PP2C-D SUBFAMILY OF TYPE 2C PROTEIN PHOSPHATASES</scope>
    <source>
        <strain>cv. Columbia</strain>
    </source>
</reference>
<reference key="6">
    <citation type="journal article" date="2017" name="BMC Plant Biol.">
        <title>Divergent regulation of Arabidopsis SAUR genes: a focus on the SAUR10-clade.</title>
        <authorList>
            <person name="van Mourik H."/>
            <person name="van Dijk A.D.J."/>
            <person name="Stortenbeker N."/>
            <person name="Angenent G.C."/>
            <person name="Bemer M."/>
        </authorList>
    </citation>
    <scope>TISSUE SPECIFICITY</scope>
    <scope>DEVELOPMENTAL STAGE</scope>
    <scope>REPRESSION BY ABSCISIC ACID</scope>
    <scope>INDUCTION BY AUXIN; BRASSINOSTEROIDS AND REDUCED R:FR LIGHT CONDITIONS</scope>
    <scope>GENE FAMILY</scope>
    <source>
        <strain>cv. Columbia</strain>
    </source>
</reference>
<reference key="7">
    <citation type="journal article" date="2017" name="Plant Physiol.">
        <title>Constitutive expression of Arabidopsis SMALL AUXIN UP RNA19 (SAUR19) in tomato confers auxin-independent hypocotyl elongation.</title>
        <authorList>
            <person name="Spartz A.K."/>
            <person name="Lor V.S."/>
            <person name="Ren H."/>
            <person name="Olszewski N.E."/>
            <person name="Miller N.D."/>
            <person name="Wu G."/>
            <person name="Spalding E.P."/>
            <person name="Gray W.M."/>
        </authorList>
    </citation>
    <scope>INDUCTION BY AUXIN</scope>
</reference>
<reference key="8">
    <citation type="journal article" date="2019" name="BMC Genomics">
        <title>Uncovering the molecular signature underlying the light intensity-dependent root development in Arabidopsis thaliana.</title>
        <authorList>
            <person name="Kumari S."/>
            <person name="Yadav S."/>
            <person name="Patra D."/>
            <person name="Singh S."/>
            <person name="Sarkar A.K."/>
            <person name="Panigrahi K.C.S."/>
        </authorList>
    </citation>
    <scope>FUNCTION</scope>
    <scope>INDUCTION BY LIGHT</scope>
</reference>
<reference key="9">
    <citation type="journal article" date="2019" name="Plant Cell Physiol.">
        <title>Brassinosteroid induces phosphorylation of the plasma membrane H+-ATPase during hypocotyl elongation in Arabidopsis thaliana.</title>
        <authorList>
            <person name="Minami A."/>
            <person name="Takahashi K."/>
            <person name="Inoue S.I."/>
            <person name="Tada Y."/>
            <person name="Kinoshita T."/>
        </authorList>
    </citation>
    <scope>INDUCTION BY BRASSINOLIDE</scope>
    <source>
        <strain>cv. Columbia</strain>
    </source>
</reference>
<name>SAUR9_ARATH</name>
<proteinExistence type="evidence at protein level"/>